<feature type="chain" id="PRO_1000100310" description="CinA-like protein">
    <location>
        <begin position="1"/>
        <end position="420"/>
    </location>
</feature>
<comment type="similarity">
    <text evidence="1">Belongs to the CinA family.</text>
</comment>
<accession>B3QTC8</accession>
<protein>
    <recommendedName>
        <fullName evidence="1">CinA-like protein</fullName>
    </recommendedName>
</protein>
<reference key="1">
    <citation type="submission" date="2008-06" db="EMBL/GenBank/DDBJ databases">
        <title>Complete sequence of Chloroherpeton thalassium ATCC 35110.</title>
        <authorList>
            <consortium name="US DOE Joint Genome Institute"/>
            <person name="Lucas S."/>
            <person name="Copeland A."/>
            <person name="Lapidus A."/>
            <person name="Glavina del Rio T."/>
            <person name="Dalin E."/>
            <person name="Tice H."/>
            <person name="Bruce D."/>
            <person name="Goodwin L."/>
            <person name="Pitluck S."/>
            <person name="Schmutz J."/>
            <person name="Larimer F."/>
            <person name="Land M."/>
            <person name="Hauser L."/>
            <person name="Kyrpides N."/>
            <person name="Mikhailova N."/>
            <person name="Liu Z."/>
            <person name="Li T."/>
            <person name="Zhao F."/>
            <person name="Overmann J."/>
            <person name="Bryant D.A."/>
            <person name="Richardson P."/>
        </authorList>
    </citation>
    <scope>NUCLEOTIDE SEQUENCE [LARGE SCALE GENOMIC DNA]</scope>
    <source>
        <strain>ATCC 35110 / GB-78</strain>
    </source>
</reference>
<gene>
    <name type="ordered locus">Ctha_1770</name>
</gene>
<sequence length="420" mass="45192">MLAEIISIGDELLIGQVVNTNATFISKCLDEIGISTRRILTVSDKPDCIERQLADSLSHADLVLTTGGLGPTHDDITKKIIADFFGLGYEFNEEAFERCKALFARRGREMPASNRSQGEVIEGSVVLQNTRGTAPGMILQNLPNYEGKFVVIMPGVPYEMQEMMRVSVVPFFQPHSKHFIKHTSLMTAGIGESTLAEQIGEVKAFLPDGSTLAFLPHSVGVRLRVSSKGENFQAVQKEHAQVVDALKARIGGYLYATTDMPLEEHIGELLKSRGLSIATAESCTGGLIANRLTNIPGSSAYFYQGFVTYSNEAKIKALGVREETLAAHGAVSEETAQEMAAGCLEKTGSDIAISTTGIAGPGGGTEIKPVGMVCIGVATSAKLGSRSFAKTMIFWADRLLNKERFSEAALNLVRELLNAS</sequence>
<dbReference type="EMBL" id="CP001100">
    <property type="protein sequence ID" value="ACF14227.1"/>
    <property type="molecule type" value="Genomic_DNA"/>
</dbReference>
<dbReference type="RefSeq" id="WP_012500311.1">
    <property type="nucleotide sequence ID" value="NC_011026.1"/>
</dbReference>
<dbReference type="SMR" id="B3QTC8"/>
<dbReference type="STRING" id="517418.Ctha_1770"/>
<dbReference type="KEGG" id="cts:Ctha_1770"/>
<dbReference type="eggNOG" id="COG1058">
    <property type="taxonomic scope" value="Bacteria"/>
</dbReference>
<dbReference type="eggNOG" id="COG1546">
    <property type="taxonomic scope" value="Bacteria"/>
</dbReference>
<dbReference type="HOGENOM" id="CLU_030805_9_2_10"/>
<dbReference type="OrthoDB" id="9801454at2"/>
<dbReference type="Proteomes" id="UP000001208">
    <property type="component" value="Chromosome"/>
</dbReference>
<dbReference type="CDD" id="cd00885">
    <property type="entry name" value="cinA"/>
    <property type="match status" value="1"/>
</dbReference>
<dbReference type="Gene3D" id="3.30.70.2860">
    <property type="match status" value="1"/>
</dbReference>
<dbReference type="Gene3D" id="3.90.950.20">
    <property type="entry name" value="CinA-like"/>
    <property type="match status" value="1"/>
</dbReference>
<dbReference type="Gene3D" id="3.40.980.10">
    <property type="entry name" value="MoaB/Mog-like domain"/>
    <property type="match status" value="1"/>
</dbReference>
<dbReference type="HAMAP" id="MF_00226_B">
    <property type="entry name" value="CinA_B"/>
    <property type="match status" value="1"/>
</dbReference>
<dbReference type="InterPro" id="IPR050101">
    <property type="entry name" value="CinA"/>
</dbReference>
<dbReference type="InterPro" id="IPR036653">
    <property type="entry name" value="CinA-like_C"/>
</dbReference>
<dbReference type="InterPro" id="IPR008136">
    <property type="entry name" value="CinA_C"/>
</dbReference>
<dbReference type="InterPro" id="IPR041424">
    <property type="entry name" value="CinA_KH"/>
</dbReference>
<dbReference type="InterPro" id="IPR008135">
    <property type="entry name" value="Competence-induced_CinA"/>
</dbReference>
<dbReference type="InterPro" id="IPR036425">
    <property type="entry name" value="MoaB/Mog-like_dom_sf"/>
</dbReference>
<dbReference type="InterPro" id="IPR001453">
    <property type="entry name" value="MoaB/Mog_dom"/>
</dbReference>
<dbReference type="NCBIfam" id="TIGR00200">
    <property type="entry name" value="cinA_nterm"/>
    <property type="match status" value="1"/>
</dbReference>
<dbReference type="NCBIfam" id="TIGR00177">
    <property type="entry name" value="molyb_syn"/>
    <property type="match status" value="1"/>
</dbReference>
<dbReference type="NCBIfam" id="TIGR00199">
    <property type="entry name" value="PncC_domain"/>
    <property type="match status" value="1"/>
</dbReference>
<dbReference type="NCBIfam" id="NF001813">
    <property type="entry name" value="PRK00549.1"/>
    <property type="match status" value="1"/>
</dbReference>
<dbReference type="PANTHER" id="PTHR13939">
    <property type="entry name" value="NICOTINAMIDE-NUCLEOTIDE AMIDOHYDROLASE PNCC"/>
    <property type="match status" value="1"/>
</dbReference>
<dbReference type="PANTHER" id="PTHR13939:SF0">
    <property type="entry name" value="NMN AMIDOHYDROLASE-LIKE PROTEIN YFAY"/>
    <property type="match status" value="1"/>
</dbReference>
<dbReference type="Pfam" id="PF02464">
    <property type="entry name" value="CinA"/>
    <property type="match status" value="1"/>
</dbReference>
<dbReference type="Pfam" id="PF18146">
    <property type="entry name" value="CinA_KH"/>
    <property type="match status" value="1"/>
</dbReference>
<dbReference type="Pfam" id="PF00994">
    <property type="entry name" value="MoCF_biosynth"/>
    <property type="match status" value="1"/>
</dbReference>
<dbReference type="PIRSF" id="PIRSF006728">
    <property type="entry name" value="CinA"/>
    <property type="match status" value="1"/>
</dbReference>
<dbReference type="SMART" id="SM00852">
    <property type="entry name" value="MoCF_biosynth"/>
    <property type="match status" value="1"/>
</dbReference>
<dbReference type="SUPFAM" id="SSF142433">
    <property type="entry name" value="CinA-like"/>
    <property type="match status" value="1"/>
</dbReference>
<dbReference type="SUPFAM" id="SSF53218">
    <property type="entry name" value="Molybdenum cofactor biosynthesis proteins"/>
    <property type="match status" value="1"/>
</dbReference>
<organism>
    <name type="scientific">Chloroherpeton thalassium (strain ATCC 35110 / GB-78)</name>
    <dbReference type="NCBI Taxonomy" id="517418"/>
    <lineage>
        <taxon>Bacteria</taxon>
        <taxon>Pseudomonadati</taxon>
        <taxon>Chlorobiota</taxon>
        <taxon>Chlorobiia</taxon>
        <taxon>Chlorobiales</taxon>
        <taxon>Chloroherpetonaceae</taxon>
        <taxon>Chloroherpeton</taxon>
    </lineage>
</organism>
<proteinExistence type="inferred from homology"/>
<evidence type="ECO:0000255" key="1">
    <source>
        <dbReference type="HAMAP-Rule" id="MF_00226"/>
    </source>
</evidence>
<keyword id="KW-1185">Reference proteome</keyword>
<name>CINAL_CHLT3</name>